<gene>
    <name evidence="1" type="primary">lptD</name>
    <name type="synonym">imp</name>
    <name type="synonym">ostA</name>
    <name type="ordered locus">MS2357</name>
</gene>
<organism>
    <name type="scientific">Mannheimia succiniciproducens (strain KCTC 0769BP / MBEL55E)</name>
    <dbReference type="NCBI Taxonomy" id="221988"/>
    <lineage>
        <taxon>Bacteria</taxon>
        <taxon>Pseudomonadati</taxon>
        <taxon>Pseudomonadota</taxon>
        <taxon>Gammaproteobacteria</taxon>
        <taxon>Pasteurellales</taxon>
        <taxon>Pasteurellaceae</taxon>
        <taxon>Basfia</taxon>
    </lineage>
</organism>
<dbReference type="EMBL" id="AE016827">
    <property type="protein sequence ID" value="AAU38964.1"/>
    <property type="molecule type" value="Genomic_DNA"/>
</dbReference>
<dbReference type="RefSeq" id="WP_011201502.1">
    <property type="nucleotide sequence ID" value="NC_006300.1"/>
</dbReference>
<dbReference type="SMR" id="Q65PZ6"/>
<dbReference type="STRING" id="221988.MS2357"/>
<dbReference type="KEGG" id="msu:MS2357"/>
<dbReference type="eggNOG" id="COG1452">
    <property type="taxonomic scope" value="Bacteria"/>
</dbReference>
<dbReference type="HOGENOM" id="CLU_009039_2_0_6"/>
<dbReference type="OrthoDB" id="9760225at2"/>
<dbReference type="Proteomes" id="UP000000607">
    <property type="component" value="Chromosome"/>
</dbReference>
<dbReference type="GO" id="GO:0009279">
    <property type="term" value="C:cell outer membrane"/>
    <property type="evidence" value="ECO:0007669"/>
    <property type="project" value="UniProtKB-SubCell"/>
</dbReference>
<dbReference type="GO" id="GO:1990351">
    <property type="term" value="C:transporter complex"/>
    <property type="evidence" value="ECO:0007669"/>
    <property type="project" value="TreeGrafter"/>
</dbReference>
<dbReference type="GO" id="GO:0043165">
    <property type="term" value="P:Gram-negative-bacterium-type cell outer membrane assembly"/>
    <property type="evidence" value="ECO:0007669"/>
    <property type="project" value="UniProtKB-UniRule"/>
</dbReference>
<dbReference type="GO" id="GO:0015920">
    <property type="term" value="P:lipopolysaccharide transport"/>
    <property type="evidence" value="ECO:0007669"/>
    <property type="project" value="InterPro"/>
</dbReference>
<dbReference type="HAMAP" id="MF_01411">
    <property type="entry name" value="LPS_assembly_LptD"/>
    <property type="match status" value="1"/>
</dbReference>
<dbReference type="InterPro" id="IPR020889">
    <property type="entry name" value="LipoPS_assembly_LptD"/>
</dbReference>
<dbReference type="InterPro" id="IPR050218">
    <property type="entry name" value="LptD"/>
</dbReference>
<dbReference type="InterPro" id="IPR007543">
    <property type="entry name" value="LptD_C"/>
</dbReference>
<dbReference type="InterPro" id="IPR005653">
    <property type="entry name" value="OstA-like_N"/>
</dbReference>
<dbReference type="NCBIfam" id="NF002997">
    <property type="entry name" value="PRK03761.1"/>
    <property type="match status" value="1"/>
</dbReference>
<dbReference type="PANTHER" id="PTHR30189">
    <property type="entry name" value="LPS-ASSEMBLY PROTEIN"/>
    <property type="match status" value="1"/>
</dbReference>
<dbReference type="PANTHER" id="PTHR30189:SF1">
    <property type="entry name" value="LPS-ASSEMBLY PROTEIN LPTD"/>
    <property type="match status" value="1"/>
</dbReference>
<dbReference type="Pfam" id="PF04453">
    <property type="entry name" value="LptD"/>
    <property type="match status" value="1"/>
</dbReference>
<dbReference type="Pfam" id="PF03968">
    <property type="entry name" value="LptD_N"/>
    <property type="match status" value="1"/>
</dbReference>
<sequence>MKKNYYSLISFSIFTALYSTAGFADLQQQCLAGVPQFSGEVVKGNANEMPVYIEADKAELNHPTKGVYQGNVDIKQGNRHLITETAEIIQSGQDENVQRYAYAKGGFDYKDNIINLTGDDAKVHLNTKDTDVKNADYQFVGRQGRGSAQSAEVREDYRLLNNATFTSCLPNDNSWQIEAKEMKQYIKEEYAEMWHARFKVAGVPVFYTPYLQLPIGDRRRSGLLIPSAGSSSRDGYWYSQPIYWNIAPNYDATFTPKYMTHRGWQMNGEFRYLNEIGEGKIAGEYLGDDRYKDYIGDNKSRHLFYWAHNAKLFDNWRLNVNYTKVSDKRYFSDFDSDYGSSTDGYATQTARLAYFQPNYNFAISAKQYQVFDEVSVGPYKALPQIDFNYYQNDLAQGLLDFKLFAQAVRFENDSTLMPTAWRYHAEPSLNLPMSNQYGSLNVETKLYATHYEQRKGSSARAEDIDRSVNRMIPQIKVDLQTVLASDKTFVDGFTQTLEPHLQYLYRPYRDQSNIGSKRNTEYLGYGYDSALLQQDYFSLFRDRRYSGLDRIASANQFTLGGTTRFYDEQANERFNLSLGQILYLNDSRIDNNSDHSTSGRASSWALESNWKLSDQWNWRGSYQYDTRLNETSLANTTLEYNPEKNNLIQLNYRYASQAYIDQNLTSGANRYNQDIKQIGTTIAWEVSDNWVLVGRYYHDIALNKLVEEYAGIKYNTCCWSVGVGARRHLVSKSNYTYSANKDTIYDNSFGITFELRGLGNEQHSGIVDMLDKGMLPYVKPFNL</sequence>
<reference key="1">
    <citation type="journal article" date="2004" name="Nat. Biotechnol.">
        <title>The genome sequence of the capnophilic rumen bacterium Mannheimia succiniciproducens.</title>
        <authorList>
            <person name="Hong S.H."/>
            <person name="Kim J.S."/>
            <person name="Lee S.Y."/>
            <person name="In Y.H."/>
            <person name="Choi S.S."/>
            <person name="Rih J.-K."/>
            <person name="Kim C.H."/>
            <person name="Jeong H."/>
            <person name="Hur C.G."/>
            <person name="Kim J.J."/>
        </authorList>
    </citation>
    <scope>NUCLEOTIDE SEQUENCE [LARGE SCALE GENOMIC DNA]</scope>
    <source>
        <strain>KCTC 0769BP / MBEL55E</strain>
    </source>
</reference>
<proteinExistence type="inferred from homology"/>
<protein>
    <recommendedName>
        <fullName evidence="1">LPS-assembly protein LptD</fullName>
    </recommendedName>
</protein>
<name>LPTD_MANSM</name>
<feature type="signal peptide" evidence="1">
    <location>
        <begin position="1"/>
        <end position="24"/>
    </location>
</feature>
<feature type="chain" id="PRO_0000020282" description="LPS-assembly protein LptD">
    <location>
        <begin position="25"/>
        <end position="783"/>
    </location>
</feature>
<comment type="function">
    <text evidence="1">Together with LptE, is involved in the assembly of lipopolysaccharide (LPS) at the surface of the outer membrane.</text>
</comment>
<comment type="subunit">
    <text evidence="1">Component of the lipopolysaccharide transport and assembly complex. Interacts with LptE and LptA.</text>
</comment>
<comment type="subcellular location">
    <subcellularLocation>
        <location evidence="1">Cell outer membrane</location>
    </subcellularLocation>
</comment>
<comment type="similarity">
    <text evidence="1">Belongs to the LptD family.</text>
</comment>
<accession>Q65PZ6</accession>
<keyword id="KW-0998">Cell outer membrane</keyword>
<keyword id="KW-0472">Membrane</keyword>
<keyword id="KW-0732">Signal</keyword>
<evidence type="ECO:0000255" key="1">
    <source>
        <dbReference type="HAMAP-Rule" id="MF_01411"/>
    </source>
</evidence>